<name>CYSA_BURMA</name>
<comment type="function">
    <text evidence="1">Part of the ABC transporter complex CysAWTP involved in sulfate/thiosulfate import. Responsible for energy coupling to the transport system.</text>
</comment>
<comment type="catalytic activity">
    <reaction evidence="1">
        <text>sulfate(out) + ATP + H2O = sulfate(in) + ADP + phosphate + H(+)</text>
        <dbReference type="Rhea" id="RHEA:10192"/>
        <dbReference type="ChEBI" id="CHEBI:15377"/>
        <dbReference type="ChEBI" id="CHEBI:15378"/>
        <dbReference type="ChEBI" id="CHEBI:16189"/>
        <dbReference type="ChEBI" id="CHEBI:30616"/>
        <dbReference type="ChEBI" id="CHEBI:43474"/>
        <dbReference type="ChEBI" id="CHEBI:456216"/>
        <dbReference type="EC" id="7.3.2.3"/>
    </reaction>
</comment>
<comment type="catalytic activity">
    <reaction evidence="1">
        <text>thiosulfate(out) + ATP + H2O = thiosulfate(in) + ADP + phosphate + H(+)</text>
        <dbReference type="Rhea" id="RHEA:29871"/>
        <dbReference type="ChEBI" id="CHEBI:15377"/>
        <dbReference type="ChEBI" id="CHEBI:15378"/>
        <dbReference type="ChEBI" id="CHEBI:30616"/>
        <dbReference type="ChEBI" id="CHEBI:33542"/>
        <dbReference type="ChEBI" id="CHEBI:43474"/>
        <dbReference type="ChEBI" id="CHEBI:456216"/>
        <dbReference type="EC" id="7.3.2.3"/>
    </reaction>
</comment>
<comment type="subunit">
    <text evidence="1">The complex is composed of two ATP-binding proteins (CysA), two transmembrane proteins (CysT and CysW) and a solute-binding protein (CysP).</text>
</comment>
<comment type="subcellular location">
    <subcellularLocation>
        <location evidence="1">Cell inner membrane</location>
        <topology evidence="1">Peripheral membrane protein</topology>
    </subcellularLocation>
</comment>
<comment type="similarity">
    <text evidence="1">Belongs to the ABC transporter superfamily. Sulfate/tungstate importer (TC 3.A.1.6) family.</text>
</comment>
<proteinExistence type="inferred from homology"/>
<sequence length="351" mass="38221">MGITVRNLHKRFGEFAALDDVSLDFPAGELVALLGPSGCGKTTLLRVIAGLEHADSGQVVLQGLDVASVGARERQVGFVFQHYALFRHMTVFENVAFGLRVKPRRERPSEAAIRAKVHELLSLVQLDWLAQRYPSELSGGQRQRIALARALAVEPKVLLLDEPFGALDAKVRKELRGWLRRLHDDLHISTIFVTHDQEEALEVADRIVVLNHGRVEQVGSPQAVYDHPRSAFVYEFLGAANRLDGTVSGNGFVAHGAAQAIAVDADFAGPARAYVRPHDLELAAPHARAQGIAADVRRVVPLGGSVRVELAARSGEVLEAELDRNAWRALALDVGDALTAVPRAVRVFPAR</sequence>
<organism>
    <name type="scientific">Burkholderia mallei (strain ATCC 23344)</name>
    <dbReference type="NCBI Taxonomy" id="243160"/>
    <lineage>
        <taxon>Bacteria</taxon>
        <taxon>Pseudomonadati</taxon>
        <taxon>Pseudomonadota</taxon>
        <taxon>Betaproteobacteria</taxon>
        <taxon>Burkholderiales</taxon>
        <taxon>Burkholderiaceae</taxon>
        <taxon>Burkholderia</taxon>
        <taxon>pseudomallei group</taxon>
    </lineage>
</organism>
<reference key="1">
    <citation type="journal article" date="2004" name="Proc. Natl. Acad. Sci. U.S.A.">
        <title>Structural flexibility in the Burkholderia mallei genome.</title>
        <authorList>
            <person name="Nierman W.C."/>
            <person name="DeShazer D."/>
            <person name="Kim H.S."/>
            <person name="Tettelin H."/>
            <person name="Nelson K.E."/>
            <person name="Feldblyum T.V."/>
            <person name="Ulrich R.L."/>
            <person name="Ronning C.M."/>
            <person name="Brinkac L.M."/>
            <person name="Daugherty S.C."/>
            <person name="Davidsen T.D."/>
            <person name="DeBoy R.T."/>
            <person name="Dimitrov G."/>
            <person name="Dodson R.J."/>
            <person name="Durkin A.S."/>
            <person name="Gwinn M.L."/>
            <person name="Haft D.H."/>
            <person name="Khouri H.M."/>
            <person name="Kolonay J.F."/>
            <person name="Madupu R."/>
            <person name="Mohammoud Y."/>
            <person name="Nelson W.C."/>
            <person name="Radune D."/>
            <person name="Romero C.M."/>
            <person name="Sarria S."/>
            <person name="Selengut J."/>
            <person name="Shamblin C."/>
            <person name="Sullivan S.A."/>
            <person name="White O."/>
            <person name="Yu Y."/>
            <person name="Zafar N."/>
            <person name="Zhou L."/>
            <person name="Fraser C.M."/>
        </authorList>
    </citation>
    <scope>NUCLEOTIDE SEQUENCE [LARGE SCALE GENOMIC DNA]</scope>
    <source>
        <strain>ATCC 23344</strain>
    </source>
</reference>
<dbReference type="EC" id="7.3.2.3" evidence="1"/>
<dbReference type="EMBL" id="CP000010">
    <property type="protein sequence ID" value="AAU47464.1"/>
    <property type="molecule type" value="Genomic_DNA"/>
</dbReference>
<dbReference type="RefSeq" id="WP_004192434.1">
    <property type="nucleotide sequence ID" value="NC_006348.1"/>
</dbReference>
<dbReference type="RefSeq" id="YP_102887.1">
    <property type="nucleotide sequence ID" value="NC_006348.1"/>
</dbReference>
<dbReference type="SMR" id="Q62K82"/>
<dbReference type="KEGG" id="bma:BMA1206"/>
<dbReference type="PATRIC" id="fig|243160.12.peg.1242"/>
<dbReference type="eggNOG" id="COG1118">
    <property type="taxonomic scope" value="Bacteria"/>
</dbReference>
<dbReference type="HOGENOM" id="CLU_000604_1_1_4"/>
<dbReference type="Proteomes" id="UP000006693">
    <property type="component" value="Chromosome 1"/>
</dbReference>
<dbReference type="GO" id="GO:0043190">
    <property type="term" value="C:ATP-binding cassette (ABC) transporter complex"/>
    <property type="evidence" value="ECO:0007669"/>
    <property type="project" value="InterPro"/>
</dbReference>
<dbReference type="GO" id="GO:0015419">
    <property type="term" value="F:ABC-type sulfate transporter activity"/>
    <property type="evidence" value="ECO:0007669"/>
    <property type="project" value="InterPro"/>
</dbReference>
<dbReference type="GO" id="GO:0102025">
    <property type="term" value="F:ABC-type thiosulfate transporter activity"/>
    <property type="evidence" value="ECO:0007669"/>
    <property type="project" value="RHEA"/>
</dbReference>
<dbReference type="GO" id="GO:0005524">
    <property type="term" value="F:ATP binding"/>
    <property type="evidence" value="ECO:0007669"/>
    <property type="project" value="UniProtKB-KW"/>
</dbReference>
<dbReference type="GO" id="GO:0016887">
    <property type="term" value="F:ATP hydrolysis activity"/>
    <property type="evidence" value="ECO:0007669"/>
    <property type="project" value="InterPro"/>
</dbReference>
<dbReference type="CDD" id="cd03296">
    <property type="entry name" value="ABC_CysA_sulfate_importer"/>
    <property type="match status" value="1"/>
</dbReference>
<dbReference type="FunFam" id="3.40.50.300:FF:000227">
    <property type="entry name" value="Sulfate/thiosulfate import ATP-binding protein CysA"/>
    <property type="match status" value="1"/>
</dbReference>
<dbReference type="Gene3D" id="3.40.50.300">
    <property type="entry name" value="P-loop containing nucleotide triphosphate hydrolases"/>
    <property type="match status" value="1"/>
</dbReference>
<dbReference type="InterPro" id="IPR003593">
    <property type="entry name" value="AAA+_ATPase"/>
</dbReference>
<dbReference type="InterPro" id="IPR050093">
    <property type="entry name" value="ABC_SmlMolc_Importer"/>
</dbReference>
<dbReference type="InterPro" id="IPR003439">
    <property type="entry name" value="ABC_transporter-like_ATP-bd"/>
</dbReference>
<dbReference type="InterPro" id="IPR017871">
    <property type="entry name" value="ABC_transporter-like_CS"/>
</dbReference>
<dbReference type="InterPro" id="IPR008995">
    <property type="entry name" value="Mo/tungstate-bd_C_term_dom"/>
</dbReference>
<dbReference type="InterPro" id="IPR027417">
    <property type="entry name" value="P-loop_NTPase"/>
</dbReference>
<dbReference type="InterPro" id="IPR005666">
    <property type="entry name" value="Sulph_transpt1"/>
</dbReference>
<dbReference type="InterPro" id="IPR024765">
    <property type="entry name" value="TOBE-like"/>
</dbReference>
<dbReference type="NCBIfam" id="TIGR00968">
    <property type="entry name" value="3a0106s01"/>
    <property type="match status" value="1"/>
</dbReference>
<dbReference type="PANTHER" id="PTHR42781">
    <property type="entry name" value="SPERMIDINE/PUTRESCINE IMPORT ATP-BINDING PROTEIN POTA"/>
    <property type="match status" value="1"/>
</dbReference>
<dbReference type="PANTHER" id="PTHR42781:SF4">
    <property type="entry name" value="SPERMIDINE_PUTRESCINE IMPORT ATP-BINDING PROTEIN POTA"/>
    <property type="match status" value="1"/>
</dbReference>
<dbReference type="Pfam" id="PF00005">
    <property type="entry name" value="ABC_tran"/>
    <property type="match status" value="1"/>
</dbReference>
<dbReference type="Pfam" id="PF12857">
    <property type="entry name" value="TOBE_3"/>
    <property type="match status" value="1"/>
</dbReference>
<dbReference type="SMART" id="SM00382">
    <property type="entry name" value="AAA"/>
    <property type="match status" value="1"/>
</dbReference>
<dbReference type="SUPFAM" id="SSF50331">
    <property type="entry name" value="MOP-like"/>
    <property type="match status" value="1"/>
</dbReference>
<dbReference type="SUPFAM" id="SSF52540">
    <property type="entry name" value="P-loop containing nucleoside triphosphate hydrolases"/>
    <property type="match status" value="1"/>
</dbReference>
<dbReference type="PROSITE" id="PS00211">
    <property type="entry name" value="ABC_TRANSPORTER_1"/>
    <property type="match status" value="1"/>
</dbReference>
<dbReference type="PROSITE" id="PS50893">
    <property type="entry name" value="ABC_TRANSPORTER_2"/>
    <property type="match status" value="1"/>
</dbReference>
<dbReference type="PROSITE" id="PS51237">
    <property type="entry name" value="CYSA"/>
    <property type="match status" value="1"/>
</dbReference>
<evidence type="ECO:0000255" key="1">
    <source>
        <dbReference type="HAMAP-Rule" id="MF_01701"/>
    </source>
</evidence>
<protein>
    <recommendedName>
        <fullName evidence="1">Sulfate/thiosulfate import ATP-binding protein CysA</fullName>
        <ecNumber evidence="1">7.3.2.3</ecNumber>
    </recommendedName>
    <alternativeName>
        <fullName evidence="1">Sulfate-transporting ATPase</fullName>
    </alternativeName>
</protein>
<feature type="chain" id="PRO_0000092260" description="Sulfate/thiosulfate import ATP-binding protein CysA">
    <location>
        <begin position="1"/>
        <end position="351"/>
    </location>
</feature>
<feature type="domain" description="ABC transporter" evidence="1">
    <location>
        <begin position="3"/>
        <end position="237"/>
    </location>
</feature>
<feature type="binding site" evidence="1">
    <location>
        <begin position="35"/>
        <end position="42"/>
    </location>
    <ligand>
        <name>ATP</name>
        <dbReference type="ChEBI" id="CHEBI:30616"/>
    </ligand>
</feature>
<accession>Q62K82</accession>
<keyword id="KW-0067">ATP-binding</keyword>
<keyword id="KW-0997">Cell inner membrane</keyword>
<keyword id="KW-1003">Cell membrane</keyword>
<keyword id="KW-0472">Membrane</keyword>
<keyword id="KW-0547">Nucleotide-binding</keyword>
<keyword id="KW-1185">Reference proteome</keyword>
<keyword id="KW-0764">Sulfate transport</keyword>
<keyword id="KW-1278">Translocase</keyword>
<keyword id="KW-0813">Transport</keyword>
<gene>
    <name evidence="1" type="primary">cysA</name>
    <name type="ordered locus">BMA1206</name>
</gene>